<feature type="chain" id="PRO_0000356184" description="Small integral membrane protein 1">
    <location>
        <begin position="1"/>
        <end position="72"/>
    </location>
</feature>
<feature type="topological domain" description="Extracellular" evidence="2">
    <location>
        <begin position="1"/>
        <end position="40"/>
    </location>
</feature>
<feature type="transmembrane region" description="Helical; Signal-anchor for type II membrane protein" evidence="2">
    <location>
        <begin position="41"/>
        <end position="61"/>
    </location>
</feature>
<feature type="topological domain" description="Cytoplasmic" evidence="2">
    <location>
        <begin position="62"/>
        <end position="72"/>
    </location>
</feature>
<sequence>MESNGASVQYNRWSEDNITLQEPQSRSRLLGIYNRVFTGRLVIMFKIAASLTVMVVMYIAGYITGFYVHQCG</sequence>
<evidence type="ECO:0000250" key="1">
    <source>
        <dbReference type="UniProtKB" id="B2RUZ4"/>
    </source>
</evidence>
<evidence type="ECO:0000255" key="2"/>
<evidence type="ECO:0000269" key="3">
    <source>
    </source>
</evidence>
<evidence type="ECO:0000305" key="4"/>
<gene>
    <name type="primary">smim1</name>
    <name type="ORF">zgc:194254</name>
</gene>
<comment type="function">
    <text evidence="3">Regulator of red blood cells formation.</text>
</comment>
<comment type="subunit">
    <text evidence="1">Homooligomer; disulfide-linked.</text>
</comment>
<comment type="subcellular location">
    <subcellularLocation>
        <location evidence="1">Cell membrane</location>
        <topology evidence="1">Single-pass type II membrane protein</topology>
    </subcellularLocation>
</comment>
<comment type="disruption phenotype">
    <text evidence="3">Mild reduction in the number of red blood cells.</text>
</comment>
<comment type="similarity">
    <text evidence="4">Belongs to the SMIM1 family.</text>
</comment>
<dbReference type="EMBL" id="BC162766">
    <property type="protein sequence ID" value="AAI62766.1"/>
    <property type="molecule type" value="mRNA"/>
</dbReference>
<dbReference type="SMR" id="B3DHH5"/>
<dbReference type="FunCoup" id="B3DHH5">
    <property type="interactions" value="584"/>
</dbReference>
<dbReference type="AGR" id="ZFIN:ZDB-GENE-081022-87"/>
<dbReference type="ZFIN" id="ZDB-GENE-081022-87">
    <property type="gene designation" value="smim1"/>
</dbReference>
<dbReference type="InParanoid" id="B3DHH5"/>
<dbReference type="PhylomeDB" id="B3DHH5"/>
<dbReference type="PRO" id="PR:B3DHH5"/>
<dbReference type="Proteomes" id="UP000000437">
    <property type="component" value="Unplaced"/>
</dbReference>
<dbReference type="GO" id="GO:0005886">
    <property type="term" value="C:plasma membrane"/>
    <property type="evidence" value="ECO:0000250"/>
    <property type="project" value="ZFIN"/>
</dbReference>
<dbReference type="GO" id="GO:0048823">
    <property type="term" value="P:nucleate erythrocyte development"/>
    <property type="evidence" value="ECO:0000315"/>
    <property type="project" value="ZFIN"/>
</dbReference>
<dbReference type="InterPro" id="IPR031744">
    <property type="entry name" value="SMIM1"/>
</dbReference>
<dbReference type="PANTHER" id="PTHR38503">
    <property type="entry name" value="SMALL INTEGRAL MEMBRANE PROTEIN 1"/>
    <property type="match status" value="1"/>
</dbReference>
<dbReference type="PANTHER" id="PTHR38503:SF1">
    <property type="entry name" value="SMALL INTEGRAL MEMBRANE PROTEIN 1"/>
    <property type="match status" value="1"/>
</dbReference>
<dbReference type="Pfam" id="PF15875">
    <property type="entry name" value="DUF4731"/>
    <property type="match status" value="1"/>
</dbReference>
<proteinExistence type="inferred from homology"/>
<name>SMIM1_DANRE</name>
<organism>
    <name type="scientific">Danio rerio</name>
    <name type="common">Zebrafish</name>
    <name type="synonym">Brachydanio rerio</name>
    <dbReference type="NCBI Taxonomy" id="7955"/>
    <lineage>
        <taxon>Eukaryota</taxon>
        <taxon>Metazoa</taxon>
        <taxon>Chordata</taxon>
        <taxon>Craniata</taxon>
        <taxon>Vertebrata</taxon>
        <taxon>Euteleostomi</taxon>
        <taxon>Actinopterygii</taxon>
        <taxon>Neopterygii</taxon>
        <taxon>Teleostei</taxon>
        <taxon>Ostariophysi</taxon>
        <taxon>Cypriniformes</taxon>
        <taxon>Danionidae</taxon>
        <taxon>Danioninae</taxon>
        <taxon>Danio</taxon>
    </lineage>
</organism>
<protein>
    <recommendedName>
        <fullName>Small integral membrane protein 1</fullName>
    </recommendedName>
</protein>
<keyword id="KW-1003">Cell membrane</keyword>
<keyword id="KW-1015">Disulfide bond</keyword>
<keyword id="KW-0472">Membrane</keyword>
<keyword id="KW-1185">Reference proteome</keyword>
<keyword id="KW-0735">Signal-anchor</keyword>
<keyword id="KW-0812">Transmembrane</keyword>
<keyword id="KW-1133">Transmembrane helix</keyword>
<accession>B3DHH5</accession>
<reference key="1">
    <citation type="submission" date="2008-04" db="EMBL/GenBank/DDBJ databases">
        <authorList>
            <consortium name="NIH - Zebrafish Gene Collection (ZGC) project"/>
        </authorList>
    </citation>
    <scope>NUCLEOTIDE SEQUENCE [LARGE SCALE MRNA]</scope>
</reference>
<reference key="2">
    <citation type="journal article" date="2013" name="Nat. Genet.">
        <title>SMIM1 underlies the Vel blood group and influences red blood cell traits.</title>
        <authorList>
            <person name="Cvejic A."/>
            <person name="Haer-Wigman L."/>
            <person name="Stephens J.C."/>
            <person name="Kostadima M."/>
            <person name="Smethurst P.A."/>
            <person name="Frontini M."/>
            <person name="van den Akker E."/>
            <person name="Bertone P."/>
            <person name="Bielczyk-Maczynska E."/>
            <person name="Farrow S."/>
            <person name="Fehrmann R.S."/>
            <person name="Gray A."/>
            <person name="de Haas M."/>
            <person name="Haver V.G."/>
            <person name="Jordan G."/>
            <person name="Karjalainen J."/>
            <person name="Kerstens H.H."/>
            <person name="Kiddle G."/>
            <person name="Lloyd-Jones H."/>
            <person name="Needs M."/>
            <person name="Poole J."/>
            <person name="Soussan A.A."/>
            <person name="Rendon A."/>
            <person name="Rieneck K."/>
            <person name="Sambrook J.G."/>
            <person name="Schepers H."/>
            <person name="Sillje H.H."/>
            <person name="Sipos B."/>
            <person name="Swinkels D."/>
            <person name="Tamuri A.U."/>
            <person name="Verweij N."/>
            <person name="Watkins N.A."/>
            <person name="Westra H.J."/>
            <person name="Stemple D."/>
            <person name="Franke L."/>
            <person name="Soranzo N."/>
            <person name="Stunnenberg H.G."/>
            <person name="Goldman N."/>
            <person name="van der Harst P."/>
            <person name="van der Schoot C.E."/>
            <person name="Ouwehand W.H."/>
            <person name="Albers C.A."/>
        </authorList>
    </citation>
    <scope>FUNCTION</scope>
    <scope>DISRUPTION PHENOTYPE</scope>
</reference>